<protein>
    <recommendedName>
        <fullName evidence="2">Peptide TtAP-3</fullName>
    </recommendedName>
</protein>
<feature type="peptide" id="PRO_0000459522" description="Peptide TtAP-3" evidence="1">
    <location>
        <begin position="1"/>
        <end position="17"/>
    </location>
</feature>
<feature type="modified residue" description="Lysine amide" evidence="1">
    <location>
        <position position="17"/>
    </location>
</feature>
<dbReference type="GO" id="GO:0005576">
    <property type="term" value="C:extracellular region"/>
    <property type="evidence" value="ECO:0007669"/>
    <property type="project" value="UniProtKB-SubCell"/>
</dbReference>
<evidence type="ECO:0000269" key="1">
    <source>
    </source>
</evidence>
<evidence type="ECO:0000303" key="2">
    <source>
    </source>
</evidence>
<evidence type="ECO:0000305" key="3"/>
<evidence type="ECO:0000305" key="4">
    <source>
    </source>
</evidence>
<organism>
    <name type="scientific">Tityus trinitatis</name>
    <name type="common">Trinidad thick-tailed scorpion</name>
    <dbReference type="NCBI Taxonomy" id="288786"/>
    <lineage>
        <taxon>Eukaryota</taxon>
        <taxon>Metazoa</taxon>
        <taxon>Ecdysozoa</taxon>
        <taxon>Arthropoda</taxon>
        <taxon>Chelicerata</taxon>
        <taxon>Arachnida</taxon>
        <taxon>Scorpiones</taxon>
        <taxon>Buthida</taxon>
        <taxon>Buthoidea</taxon>
        <taxon>Buthidae</taxon>
        <taxon>Tityus</taxon>
    </lineage>
</organism>
<comment type="function">
    <text evidence="1">Antimicrobial peptide with low to moderate activity against most of clinically relevant Gram-positive and Gram-negative microbial pathogens (E.coli (DSM 787); MIC=200 ug/mL, K.pneumoniae (ATCC BAA 1705); MIC&gt;40 ug/mL,0 A.baumannii (DSM 30008); MIC=100 ug/mL, S.aureus (ATCC 43300); MIC=25 ug/mL, S.epidermidis (DSM 28319); MIC=100 ug/mL, E.faecalis (MF 06036); MIC=100 ug/mL, E.faecium (NCTC 12201); MIC=50 ug/mL, C.difficile (DSM 27147); MIC=50 ug/mL, C.difficile (ATCC BAA 1382); MIC=50 ug/mL, and P.aeruginosa (DSM 50071); MIC&gt;400 ug/mL). Has low hemolytic activity (LC(50)=95 ug/mL) against mouse erythrocytes.</text>
</comment>
<comment type="subcellular location">
    <subcellularLocation>
        <location evidence="1">Secreted</location>
    </subcellularLocation>
</comment>
<comment type="tissue specificity">
    <text evidence="4">Expressed by the venom gland.</text>
</comment>
<comment type="mass spectrometry"/>
<comment type="miscellaneous">
    <text evidence="3">The primary structure of the mature peptide is identical to that of Antimicrobial peptide 6 from Tityus costatus (AC Q5G8B3) and ToAP4 from Tityus obscurus (AC A0A1E1WVR9).</text>
</comment>
<comment type="similarity">
    <text evidence="3">Belongs to the non-disulfide-bridged peptide (NDBP) superfamily. Short antimicrobial peptide (group 4) family.</text>
</comment>
<accession>P0DRB7</accession>
<proteinExistence type="evidence at protein level"/>
<keyword id="KW-0027">Amidation</keyword>
<keyword id="KW-0903">Direct protein sequencing</keyword>
<keyword id="KW-0964">Secreted</keyword>
<name>NDB43_TITTI</name>
<sequence>FFSLIPSLIGGLVSAIK</sequence>
<reference key="1">
    <citation type="journal article" date="2023" name="Antibiotics">
        <title>Identification of an antimicrobial peptide from the venom of the Trinidad thick-tailed scorpion Tityus trinitatis with potent activity against ESKAPE Pathogens and Clostridioides difficile.</title>
        <authorList>
            <person name="Mechkarska M."/>
            <person name="Cunning T.S."/>
            <person name="Taggart M.G."/>
            <person name="Ternan N.G."/>
            <person name="Leprince J."/>
            <person name="Coquet L."/>
            <person name="Jouenne T."/>
            <person name="Tena-Garces J."/>
            <person name="Calvete J.J."/>
            <person name="Conlon J.M."/>
        </authorList>
    </citation>
    <scope>PROTEIN SEQUENCE</scope>
    <scope>FUNCTION</scope>
    <scope>AMIDATION AT LYS-17</scope>
    <scope>SUBCELLULAR LOCATION</scope>
    <scope>MASS SPECTROMETRY</scope>
    <source>
        <tissue>Venom</tissue>
    </source>
</reference>